<sequence>MKIFIQNQQDKVDIDQHISKIIEESIVNTIKVFLEEENFEISVLIVDNSFIKELNRNYRNVNKETDVLSFPIFEFKNGKLLEDIVIMEDEIPLGDIVISIEKAAQQAKEFGHSLEREIAYLTVHSVLHLLGFDHIEEDDRKVMREYEEQILQSMGLTR</sequence>
<accession>B9MRS0</accession>
<keyword id="KW-0963">Cytoplasm</keyword>
<keyword id="KW-0255">Endonuclease</keyword>
<keyword id="KW-0378">Hydrolase</keyword>
<keyword id="KW-0479">Metal-binding</keyword>
<keyword id="KW-0540">Nuclease</keyword>
<keyword id="KW-0690">Ribosome biogenesis</keyword>
<keyword id="KW-0698">rRNA processing</keyword>
<keyword id="KW-0862">Zinc</keyword>
<feature type="chain" id="PRO_1000199943" description="Endoribonuclease YbeY">
    <location>
        <begin position="1"/>
        <end position="158"/>
    </location>
</feature>
<feature type="binding site" evidence="1">
    <location>
        <position position="124"/>
    </location>
    <ligand>
        <name>Zn(2+)</name>
        <dbReference type="ChEBI" id="CHEBI:29105"/>
        <note>catalytic</note>
    </ligand>
</feature>
<feature type="binding site" evidence="1">
    <location>
        <position position="128"/>
    </location>
    <ligand>
        <name>Zn(2+)</name>
        <dbReference type="ChEBI" id="CHEBI:29105"/>
        <note>catalytic</note>
    </ligand>
</feature>
<feature type="binding site" evidence="1">
    <location>
        <position position="134"/>
    </location>
    <ligand>
        <name>Zn(2+)</name>
        <dbReference type="ChEBI" id="CHEBI:29105"/>
        <note>catalytic</note>
    </ligand>
</feature>
<reference key="1">
    <citation type="submission" date="2009-01" db="EMBL/GenBank/DDBJ databases">
        <title>Complete sequence of chromosome of Caldicellulosiruptor becscii DSM 6725.</title>
        <authorList>
            <person name="Lucas S."/>
            <person name="Copeland A."/>
            <person name="Lapidus A."/>
            <person name="Glavina del Rio T."/>
            <person name="Tice H."/>
            <person name="Bruce D."/>
            <person name="Goodwin L."/>
            <person name="Pitluck S."/>
            <person name="Sims D."/>
            <person name="Meincke L."/>
            <person name="Brettin T."/>
            <person name="Detter J.C."/>
            <person name="Han C."/>
            <person name="Larimer F."/>
            <person name="Land M."/>
            <person name="Hauser L."/>
            <person name="Kyrpides N."/>
            <person name="Ovchinnikova G."/>
            <person name="Kataeva I."/>
            <person name="Adams M.W.W."/>
        </authorList>
    </citation>
    <scope>NUCLEOTIDE SEQUENCE [LARGE SCALE GENOMIC DNA]</scope>
    <source>
        <strain>ATCC BAA-1888 / DSM 6725 / KCTC 15123 / Z-1320</strain>
    </source>
</reference>
<dbReference type="EC" id="3.1.-.-" evidence="1"/>
<dbReference type="EMBL" id="CP001393">
    <property type="protein sequence ID" value="ACM60374.1"/>
    <property type="molecule type" value="Genomic_DNA"/>
</dbReference>
<dbReference type="RefSeq" id="WP_015907758.1">
    <property type="nucleotide sequence ID" value="NC_012034.1"/>
</dbReference>
<dbReference type="SMR" id="B9MRS0"/>
<dbReference type="STRING" id="521460.Athe_1274"/>
<dbReference type="GeneID" id="31772622"/>
<dbReference type="KEGG" id="ate:Athe_1274"/>
<dbReference type="eggNOG" id="COG0319">
    <property type="taxonomic scope" value="Bacteria"/>
</dbReference>
<dbReference type="HOGENOM" id="CLU_106710_3_0_9"/>
<dbReference type="Proteomes" id="UP000007723">
    <property type="component" value="Chromosome"/>
</dbReference>
<dbReference type="GO" id="GO:0005737">
    <property type="term" value="C:cytoplasm"/>
    <property type="evidence" value="ECO:0007669"/>
    <property type="project" value="UniProtKB-SubCell"/>
</dbReference>
<dbReference type="GO" id="GO:0004222">
    <property type="term" value="F:metalloendopeptidase activity"/>
    <property type="evidence" value="ECO:0007669"/>
    <property type="project" value="InterPro"/>
</dbReference>
<dbReference type="GO" id="GO:0004521">
    <property type="term" value="F:RNA endonuclease activity"/>
    <property type="evidence" value="ECO:0007669"/>
    <property type="project" value="UniProtKB-UniRule"/>
</dbReference>
<dbReference type="GO" id="GO:0008270">
    <property type="term" value="F:zinc ion binding"/>
    <property type="evidence" value="ECO:0007669"/>
    <property type="project" value="UniProtKB-UniRule"/>
</dbReference>
<dbReference type="GO" id="GO:0006364">
    <property type="term" value="P:rRNA processing"/>
    <property type="evidence" value="ECO:0007669"/>
    <property type="project" value="UniProtKB-UniRule"/>
</dbReference>
<dbReference type="Gene3D" id="3.40.390.30">
    <property type="entry name" value="Metalloproteases ('zincins'), catalytic domain"/>
    <property type="match status" value="1"/>
</dbReference>
<dbReference type="HAMAP" id="MF_00009">
    <property type="entry name" value="Endoribonucl_YbeY"/>
    <property type="match status" value="1"/>
</dbReference>
<dbReference type="InterPro" id="IPR023091">
    <property type="entry name" value="MetalPrtase_cat_dom_sf_prd"/>
</dbReference>
<dbReference type="InterPro" id="IPR002036">
    <property type="entry name" value="YbeY"/>
</dbReference>
<dbReference type="InterPro" id="IPR020549">
    <property type="entry name" value="YbeY_CS"/>
</dbReference>
<dbReference type="NCBIfam" id="TIGR00043">
    <property type="entry name" value="rRNA maturation RNase YbeY"/>
    <property type="match status" value="1"/>
</dbReference>
<dbReference type="PANTHER" id="PTHR46986">
    <property type="entry name" value="ENDORIBONUCLEASE YBEY, CHLOROPLASTIC"/>
    <property type="match status" value="1"/>
</dbReference>
<dbReference type="PANTHER" id="PTHR46986:SF1">
    <property type="entry name" value="ENDORIBONUCLEASE YBEY, CHLOROPLASTIC"/>
    <property type="match status" value="1"/>
</dbReference>
<dbReference type="Pfam" id="PF02130">
    <property type="entry name" value="YbeY"/>
    <property type="match status" value="1"/>
</dbReference>
<dbReference type="SUPFAM" id="SSF55486">
    <property type="entry name" value="Metalloproteases ('zincins'), catalytic domain"/>
    <property type="match status" value="1"/>
</dbReference>
<dbReference type="PROSITE" id="PS01306">
    <property type="entry name" value="UPF0054"/>
    <property type="match status" value="1"/>
</dbReference>
<protein>
    <recommendedName>
        <fullName evidence="1">Endoribonuclease YbeY</fullName>
        <ecNumber evidence="1">3.1.-.-</ecNumber>
    </recommendedName>
</protein>
<gene>
    <name evidence="1" type="primary">ybeY</name>
    <name type="ordered locus">Athe_1274</name>
</gene>
<comment type="function">
    <text evidence="1">Single strand-specific metallo-endoribonuclease involved in late-stage 70S ribosome quality control and in maturation of the 3' terminus of the 16S rRNA.</text>
</comment>
<comment type="cofactor">
    <cofactor evidence="1">
        <name>Zn(2+)</name>
        <dbReference type="ChEBI" id="CHEBI:29105"/>
    </cofactor>
    <text evidence="1">Binds 1 zinc ion.</text>
</comment>
<comment type="subcellular location">
    <subcellularLocation>
        <location evidence="1">Cytoplasm</location>
    </subcellularLocation>
</comment>
<comment type="similarity">
    <text evidence="1">Belongs to the endoribonuclease YbeY family.</text>
</comment>
<name>YBEY_CALBD</name>
<evidence type="ECO:0000255" key="1">
    <source>
        <dbReference type="HAMAP-Rule" id="MF_00009"/>
    </source>
</evidence>
<proteinExistence type="inferred from homology"/>
<organism>
    <name type="scientific">Caldicellulosiruptor bescii (strain ATCC BAA-1888 / DSM 6725 / KCTC 15123 / Z-1320)</name>
    <name type="common">Anaerocellum thermophilum</name>
    <dbReference type="NCBI Taxonomy" id="521460"/>
    <lineage>
        <taxon>Bacteria</taxon>
        <taxon>Bacillati</taxon>
        <taxon>Bacillota</taxon>
        <taxon>Bacillota incertae sedis</taxon>
        <taxon>Caldicellulosiruptorales</taxon>
        <taxon>Caldicellulosiruptoraceae</taxon>
        <taxon>Caldicellulosiruptor</taxon>
    </lineage>
</organism>